<sequence>MYNSSTNHHEGAPTSGHGYYMSQQQDQQHQQQQQYANEMNPYQQIPRPPAAGFSSNYMKEQGSHQSLQEHLQRETGNLGSGFTDVPALNYPATPPPHNNYAASNQMINTPPPSMGGLYRHNNNSQSMVQNGNGSGNAQLPQLSPGQYSIESEYNQNLNGSSSSSPFHQPQTLRSNGSYSSGLRSVKSFQRLQQEQENVQVQQQLSQAQQQNSRQQQQQLQYQQQQQQQQQQQHMQIQQQQQQQQQQQQSQSPVQSGFNNGTISNYMYFERRPDLLTKGTQDKAAAVKLKIENFYQSSVKYAIERNERRVELETELTSHNWSEERKSRQLSSLGKKESQFLRLRRTRLSLEDFHTVKVIGKGAFGEVRLVQKKDTGKIYAMKTLLKSEMYKKDQLAHVKAERDVLAGSDSPWVVSLYYSFQDAQYLYLIMEFLPGGDLMTMLIRWQLFTEDVTRFYMAECILAIETIHKLGFIHRDIKPDNILIDIRGHIKLSDFGLSTGFHKTHDSNYYKKLLQQDEATNGISKPGTYNANTTDTANKRQTMVVDSISLTMSNRQQIQTWRKSRRLMAYSTVGTPDYIAPEIFLYQGYGQECDWWSLGAIMYECLIGWPPFCSETPQETYRKIMNFEQTLQFPDDIHISYEAEDLIRRLLTHADQRLGRHGGADEIKSHPFFRGVDWNTIRQVEAPYIPKLSSITDTRFFPTDELENVPDSPAMAQAAKQREQMTKQGGSAPVKEDLPFIGYTYSRFDYLTRKNAL</sequence>
<proteinExistence type="evidence at protein level"/>
<protein>
    <recommendedName>
        <fullName>Serine/threonine-protein kinase CBK1</fullName>
        <ecNumber>2.7.11.1</ecNumber>
    </recommendedName>
    <alternativeName>
        <fullName>Cell wall biosynthesis kinase</fullName>
    </alternativeName>
</protein>
<accession>P53894</accession>
<accession>D6W122</accession>
<feature type="chain" id="PRO_0000085697" description="Serine/threonine-protein kinase CBK1">
    <location>
        <begin position="1"/>
        <end position="756"/>
    </location>
</feature>
<feature type="domain" description="Protein kinase" evidence="1">
    <location>
        <begin position="352"/>
        <end position="672"/>
    </location>
</feature>
<feature type="domain" description="AGC-kinase C-terminal" evidence="2">
    <location>
        <begin position="673"/>
        <end position="754"/>
    </location>
</feature>
<feature type="region of interest" description="Disordered" evidence="4">
    <location>
        <begin position="1"/>
        <end position="180"/>
    </location>
</feature>
<feature type="region of interest" description="Disordered" evidence="4">
    <location>
        <begin position="242"/>
        <end position="261"/>
    </location>
</feature>
<feature type="region of interest" description="Disordered" evidence="4">
    <location>
        <begin position="707"/>
        <end position="732"/>
    </location>
</feature>
<feature type="compositionally biased region" description="Low complexity" evidence="4">
    <location>
        <begin position="23"/>
        <end position="34"/>
    </location>
</feature>
<feature type="compositionally biased region" description="Polar residues" evidence="4">
    <location>
        <begin position="53"/>
        <end position="77"/>
    </location>
</feature>
<feature type="compositionally biased region" description="Polar residues" evidence="4">
    <location>
        <begin position="120"/>
        <end position="180"/>
    </location>
</feature>
<feature type="compositionally biased region" description="Low complexity" evidence="4">
    <location>
        <begin position="242"/>
        <end position="255"/>
    </location>
</feature>
<feature type="active site" description="Proton acceptor" evidence="1 3">
    <location>
        <position position="475"/>
    </location>
</feature>
<feature type="binding site" evidence="1">
    <location>
        <begin position="358"/>
        <end position="366"/>
    </location>
    <ligand>
        <name>ATP</name>
        <dbReference type="ChEBI" id="CHEBI:30616"/>
    </ligand>
</feature>
<feature type="binding site" evidence="1">
    <location>
        <position position="381"/>
    </location>
    <ligand>
        <name>ATP</name>
        <dbReference type="ChEBI" id="CHEBI:30616"/>
    </ligand>
</feature>
<feature type="modified residue" description="Phosphothreonine" evidence="9">
    <location>
        <position position="109"/>
    </location>
</feature>
<feature type="helix" evidence="12">
    <location>
        <begin position="278"/>
        <end position="316"/>
    </location>
</feature>
<feature type="turn" evidence="12">
    <location>
        <begin position="317"/>
        <end position="319"/>
    </location>
</feature>
<feature type="helix" evidence="12">
    <location>
        <begin position="322"/>
        <end position="344"/>
    </location>
</feature>
<feature type="strand" evidence="11">
    <location>
        <begin position="351"/>
        <end position="360"/>
    </location>
</feature>
<feature type="strand" evidence="11">
    <location>
        <begin position="365"/>
        <end position="370"/>
    </location>
</feature>
<feature type="turn" evidence="10">
    <location>
        <begin position="372"/>
        <end position="374"/>
    </location>
</feature>
<feature type="strand" evidence="11">
    <location>
        <begin position="378"/>
        <end position="384"/>
    </location>
</feature>
<feature type="turn" evidence="11">
    <location>
        <begin position="385"/>
        <end position="387"/>
    </location>
</feature>
<feature type="strand" evidence="11">
    <location>
        <begin position="415"/>
        <end position="420"/>
    </location>
</feature>
<feature type="strand" evidence="11">
    <location>
        <begin position="422"/>
        <end position="430"/>
    </location>
</feature>
<feature type="helix" evidence="11">
    <location>
        <begin position="437"/>
        <end position="444"/>
    </location>
</feature>
<feature type="helix" evidence="11">
    <location>
        <begin position="449"/>
        <end position="468"/>
    </location>
</feature>
<feature type="strand" evidence="10">
    <location>
        <begin position="478"/>
        <end position="480"/>
    </location>
</feature>
<feature type="strand" evidence="11">
    <location>
        <begin position="481"/>
        <end position="483"/>
    </location>
</feature>
<feature type="strand" evidence="11">
    <location>
        <begin position="489"/>
        <end position="491"/>
    </location>
</feature>
<feature type="strand" evidence="11">
    <location>
        <begin position="495"/>
        <end position="498"/>
    </location>
</feature>
<feature type="helix" evidence="11">
    <location>
        <begin position="554"/>
        <end position="565"/>
    </location>
</feature>
<feature type="turn" evidence="11">
    <location>
        <begin position="566"/>
        <end position="570"/>
    </location>
</feature>
<feature type="helix" evidence="11">
    <location>
        <begin position="580"/>
        <end position="582"/>
    </location>
</feature>
<feature type="strand" evidence="11">
    <location>
        <begin position="584"/>
        <end position="586"/>
    </location>
</feature>
<feature type="helix" evidence="11">
    <location>
        <begin position="592"/>
        <end position="606"/>
    </location>
</feature>
<feature type="helix" evidence="11">
    <location>
        <begin position="616"/>
        <end position="624"/>
    </location>
</feature>
<feature type="helix" evidence="11">
    <location>
        <begin position="626"/>
        <end position="629"/>
    </location>
</feature>
<feature type="helix" evidence="11">
    <location>
        <begin position="642"/>
        <end position="649"/>
    </location>
</feature>
<feature type="helix" evidence="11">
    <location>
        <begin position="653"/>
        <end position="655"/>
    </location>
</feature>
<feature type="strand" evidence="10">
    <location>
        <begin position="656"/>
        <end position="658"/>
    </location>
</feature>
<feature type="turn" evidence="11">
    <location>
        <begin position="665"/>
        <end position="668"/>
    </location>
</feature>
<feature type="turn" evidence="11">
    <location>
        <begin position="670"/>
        <end position="672"/>
    </location>
</feature>
<feature type="helix" evidence="11">
    <location>
        <begin position="679"/>
        <end position="682"/>
    </location>
</feature>
<feature type="strand" evidence="11">
    <location>
        <begin position="692"/>
        <end position="695"/>
    </location>
</feature>
<feature type="helix" evidence="11">
    <location>
        <begin position="697"/>
        <end position="699"/>
    </location>
</feature>
<feature type="helix" evidence="11">
    <location>
        <begin position="746"/>
        <end position="753"/>
    </location>
</feature>
<organism>
    <name type="scientific">Saccharomyces cerevisiae (strain ATCC 204508 / S288c)</name>
    <name type="common">Baker's yeast</name>
    <dbReference type="NCBI Taxonomy" id="559292"/>
    <lineage>
        <taxon>Eukaryota</taxon>
        <taxon>Fungi</taxon>
        <taxon>Dikarya</taxon>
        <taxon>Ascomycota</taxon>
        <taxon>Saccharomycotina</taxon>
        <taxon>Saccharomycetes</taxon>
        <taxon>Saccharomycetales</taxon>
        <taxon>Saccharomycetaceae</taxon>
        <taxon>Saccharomyces</taxon>
    </lineage>
</organism>
<reference key="1">
    <citation type="journal article" date="1996" name="Yeast">
        <title>The sequence of 36.8 kb from the left arm of chromosome XIV reveals 24 complete open reading frames: 18 correspond to new genes, one of which encodes a protein similar to the human myotonic dystrophy kinase.</title>
        <authorList>
            <person name="Nasr F."/>
            <person name="Becam A.-M."/>
            <person name="Herbert C.J."/>
        </authorList>
    </citation>
    <scope>NUCLEOTIDE SEQUENCE [GENOMIC DNA]</scope>
    <source>
        <strain>ATCC 96604 / S288c / FY1679</strain>
    </source>
</reference>
<reference key="2">
    <citation type="journal article" date="1997" name="Nature">
        <title>The nucleotide sequence of Saccharomyces cerevisiae chromosome XIV and its evolutionary implications.</title>
        <authorList>
            <person name="Philippsen P."/>
            <person name="Kleine K."/>
            <person name="Poehlmann R."/>
            <person name="Duesterhoeft A."/>
            <person name="Hamberg K."/>
            <person name="Hegemann J.H."/>
            <person name="Obermaier B."/>
            <person name="Urrestarazu L.A."/>
            <person name="Aert R."/>
            <person name="Albermann K."/>
            <person name="Altmann R."/>
            <person name="Andre B."/>
            <person name="Baladron V."/>
            <person name="Ballesta J.P.G."/>
            <person name="Becam A.-M."/>
            <person name="Beinhauer J.D."/>
            <person name="Boskovic J."/>
            <person name="Buitrago M.J."/>
            <person name="Bussereau F."/>
            <person name="Coster F."/>
            <person name="Crouzet M."/>
            <person name="D'Angelo M."/>
            <person name="Dal Pero F."/>
            <person name="De Antoni A."/>
            <person name="del Rey F."/>
            <person name="Doignon F."/>
            <person name="Domdey H."/>
            <person name="Dubois E."/>
            <person name="Fiedler T.A."/>
            <person name="Fleig U."/>
            <person name="Floeth M."/>
            <person name="Fritz C."/>
            <person name="Gaillardin C."/>
            <person name="Garcia-Cantalejo J.M."/>
            <person name="Glansdorff N."/>
            <person name="Goffeau A."/>
            <person name="Gueldener U."/>
            <person name="Herbert C.J."/>
            <person name="Heumann K."/>
            <person name="Heuss-Neitzel D."/>
            <person name="Hilbert H."/>
            <person name="Hinni K."/>
            <person name="Iraqui Houssaini I."/>
            <person name="Jacquet M."/>
            <person name="Jimenez A."/>
            <person name="Jonniaux J.-L."/>
            <person name="Karpfinger-Hartl L."/>
            <person name="Lanfranchi G."/>
            <person name="Lepingle A."/>
            <person name="Levesque H."/>
            <person name="Lyck R."/>
            <person name="Maftahi M."/>
            <person name="Mallet L."/>
            <person name="Maurer C.T.C."/>
            <person name="Messenguy F."/>
            <person name="Mewes H.-W."/>
            <person name="Moestl D."/>
            <person name="Nasr F."/>
            <person name="Nicaud J.-M."/>
            <person name="Niedenthal R.K."/>
            <person name="Pandolfo D."/>
            <person name="Pierard A."/>
            <person name="Piravandi E."/>
            <person name="Planta R.J."/>
            <person name="Pohl T.M."/>
            <person name="Purnelle B."/>
            <person name="Rebischung C."/>
            <person name="Remacha M.A."/>
            <person name="Revuelta J.L."/>
            <person name="Rinke M."/>
            <person name="Saiz J.E."/>
            <person name="Sartorello F."/>
            <person name="Scherens B."/>
            <person name="Sen-Gupta M."/>
            <person name="Soler-Mira A."/>
            <person name="Urbanus J.H.M."/>
            <person name="Valle G."/>
            <person name="Van Dyck L."/>
            <person name="Verhasselt P."/>
            <person name="Vierendeels F."/>
            <person name="Vissers S."/>
            <person name="Voet M."/>
            <person name="Volckaert G."/>
            <person name="Wach A."/>
            <person name="Wambutt R."/>
            <person name="Wedler H."/>
            <person name="Zollner A."/>
            <person name="Hani J."/>
        </authorList>
    </citation>
    <scope>NUCLEOTIDE SEQUENCE [LARGE SCALE GENOMIC DNA]</scope>
    <source>
        <strain>ATCC 204508 / S288c</strain>
    </source>
</reference>
<reference key="3">
    <citation type="journal article" date="2014" name="G3 (Bethesda)">
        <title>The reference genome sequence of Saccharomyces cerevisiae: Then and now.</title>
        <authorList>
            <person name="Engel S.R."/>
            <person name="Dietrich F.S."/>
            <person name="Fisk D.G."/>
            <person name="Binkley G."/>
            <person name="Balakrishnan R."/>
            <person name="Costanzo M.C."/>
            <person name="Dwight S.S."/>
            <person name="Hitz B.C."/>
            <person name="Karra K."/>
            <person name="Nash R.S."/>
            <person name="Weng S."/>
            <person name="Wong E.D."/>
            <person name="Lloyd P."/>
            <person name="Skrzypek M.S."/>
            <person name="Miyasato S.R."/>
            <person name="Simison M."/>
            <person name="Cherry J.M."/>
        </authorList>
    </citation>
    <scope>GENOME REANNOTATION</scope>
    <source>
        <strain>ATCC 204508 / S288c</strain>
    </source>
</reference>
<reference key="4">
    <citation type="journal article" date="2002" name="Mol. Biol. Cell">
        <title>Pag1p, a novel protein associated with protein kinase Cbk1p, is required for cell morphogenesis and proliferation in Saccharomyces cerevisiae.</title>
        <authorList>
            <person name="Du L.L."/>
            <person name="Novick P."/>
        </authorList>
    </citation>
    <scope>INTERACTION WITH PAG1/TAO3</scope>
</reference>
<reference key="5">
    <citation type="journal article" date="2002" name="J. Cell Biol.">
        <title>The Saccharomyces cerevisiae Mob2p-Cbk1p kinase complex promotes polarized growth and acts with the mitotic exit network to facilitate daughter cell-specific localization of Ace2p transcription factor.</title>
        <authorList>
            <person name="Weiss E.L."/>
            <person name="Kurischko C."/>
            <person name="Zhang C."/>
            <person name="Shokat K."/>
            <person name="Drubin D.G."/>
            <person name="Luca F.C."/>
        </authorList>
    </citation>
    <scope>INTERACTION WITH MOB2</scope>
</reference>
<reference key="6">
    <citation type="journal article" date="2003" name="Nature">
        <title>Global analysis of protein expression in yeast.</title>
        <authorList>
            <person name="Ghaemmaghami S."/>
            <person name="Huh W.-K."/>
            <person name="Bower K."/>
            <person name="Howson R.W."/>
            <person name="Belle A."/>
            <person name="Dephoure N."/>
            <person name="O'Shea E.K."/>
            <person name="Weissman J.S."/>
        </authorList>
    </citation>
    <scope>LEVEL OF PROTEIN EXPRESSION [LARGE SCALE ANALYSIS]</scope>
</reference>
<reference key="7">
    <citation type="journal article" date="2008" name="Mol. Cell. Proteomics">
        <title>A multidimensional chromatography technology for in-depth phosphoproteome analysis.</title>
        <authorList>
            <person name="Albuquerque C.P."/>
            <person name="Smolka M.B."/>
            <person name="Payne S.H."/>
            <person name="Bafna V."/>
            <person name="Eng J."/>
            <person name="Zhou H."/>
        </authorList>
    </citation>
    <scope>PHOSPHORYLATION [LARGE SCALE ANALYSIS] AT THR-109</scope>
    <scope>IDENTIFICATION BY MASS SPECTROMETRY [LARGE SCALE ANALYSIS]</scope>
</reference>
<gene>
    <name type="primary">CBK1</name>
    <name type="ordered locus">YNL161W</name>
    <name type="ORF">N1727</name>
</gene>
<dbReference type="EC" id="2.7.11.1"/>
<dbReference type="EMBL" id="X92517">
    <property type="protein sequence ID" value="CAA63278.1"/>
    <property type="molecule type" value="Genomic_DNA"/>
</dbReference>
<dbReference type="EMBL" id="Z71437">
    <property type="protein sequence ID" value="CAA96048.1"/>
    <property type="molecule type" value="Genomic_DNA"/>
</dbReference>
<dbReference type="EMBL" id="BK006947">
    <property type="protein sequence ID" value="DAA10388.1"/>
    <property type="molecule type" value="Genomic_DNA"/>
</dbReference>
<dbReference type="PIR" id="S60966">
    <property type="entry name" value="S60966"/>
</dbReference>
<dbReference type="RefSeq" id="NP_014238.3">
    <property type="nucleotide sequence ID" value="NM_001182999.3"/>
</dbReference>
<dbReference type="PDB" id="4LQP">
    <property type="method" value="X-ray"/>
    <property type="resolution" value="4.50 A"/>
    <property type="chains" value="A=251-756"/>
</dbReference>
<dbReference type="PDB" id="4LQQ">
    <property type="method" value="X-ray"/>
    <property type="resolution" value="3.60 A"/>
    <property type="chains" value="A/D=251-756"/>
</dbReference>
<dbReference type="PDB" id="4LQS">
    <property type="method" value="X-ray"/>
    <property type="resolution" value="3.30 A"/>
    <property type="chains" value="A=251-756"/>
</dbReference>
<dbReference type="PDB" id="5NCL">
    <property type="method" value="X-ray"/>
    <property type="resolution" value="3.15 A"/>
    <property type="chains" value="A=251-756"/>
</dbReference>
<dbReference type="PDB" id="5NCM">
    <property type="method" value="X-ray"/>
    <property type="resolution" value="2.80 A"/>
    <property type="chains" value="B=251-351"/>
</dbReference>
<dbReference type="PDBsum" id="4LQP"/>
<dbReference type="PDBsum" id="4LQQ"/>
<dbReference type="PDBsum" id="4LQS"/>
<dbReference type="PDBsum" id="5NCL"/>
<dbReference type="PDBsum" id="5NCM"/>
<dbReference type="SMR" id="P53894"/>
<dbReference type="BioGRID" id="35668">
    <property type="interactions" value="154"/>
</dbReference>
<dbReference type="ComplexPortal" id="CPX-1684">
    <property type="entry name" value="CBK1-MOB2 kinase complex"/>
</dbReference>
<dbReference type="DIP" id="DIP-5656N"/>
<dbReference type="ELM" id="P53894"/>
<dbReference type="FunCoup" id="P53894">
    <property type="interactions" value="750"/>
</dbReference>
<dbReference type="IntAct" id="P53894">
    <property type="interactions" value="72"/>
</dbReference>
<dbReference type="MINT" id="P53894"/>
<dbReference type="STRING" id="4932.YNL161W"/>
<dbReference type="GlyGen" id="P53894">
    <property type="glycosylation" value="1 site"/>
</dbReference>
<dbReference type="iPTMnet" id="P53894"/>
<dbReference type="PaxDb" id="4932-YNL161W"/>
<dbReference type="PeptideAtlas" id="P53894"/>
<dbReference type="EnsemblFungi" id="YNL161W_mRNA">
    <property type="protein sequence ID" value="YNL161W"/>
    <property type="gene ID" value="YNL161W"/>
</dbReference>
<dbReference type="GeneID" id="855561"/>
<dbReference type="KEGG" id="sce:YNL161W"/>
<dbReference type="AGR" id="SGD:S000005105"/>
<dbReference type="SGD" id="S000005105">
    <property type="gene designation" value="CBK1"/>
</dbReference>
<dbReference type="VEuPathDB" id="FungiDB:YNL161W"/>
<dbReference type="eggNOG" id="KOG0605">
    <property type="taxonomic scope" value="Eukaryota"/>
</dbReference>
<dbReference type="GeneTree" id="ENSGT00940000153544"/>
<dbReference type="HOGENOM" id="CLU_000288_67_2_1"/>
<dbReference type="InParanoid" id="P53894"/>
<dbReference type="OMA" id="HDNAYYQ"/>
<dbReference type="OrthoDB" id="3638488at2759"/>
<dbReference type="BioCyc" id="YEAST:G3O-33177-MONOMER"/>
<dbReference type="BRENDA" id="2.7.11.1">
    <property type="organism ID" value="984"/>
</dbReference>
<dbReference type="BioGRID-ORCS" id="855561">
    <property type="hits" value="5 hits in 13 CRISPR screens"/>
</dbReference>
<dbReference type="EvolutionaryTrace" id="P53894"/>
<dbReference type="PRO" id="PR:P53894"/>
<dbReference type="Proteomes" id="UP000002311">
    <property type="component" value="Chromosome XIV"/>
</dbReference>
<dbReference type="RNAct" id="P53894">
    <property type="molecule type" value="protein"/>
</dbReference>
<dbReference type="GO" id="GO:0005938">
    <property type="term" value="C:cell cortex"/>
    <property type="evidence" value="ECO:0000314"/>
    <property type="project" value="SGD"/>
</dbReference>
<dbReference type="GO" id="GO:0005933">
    <property type="term" value="C:cellular bud"/>
    <property type="evidence" value="ECO:0000314"/>
    <property type="project" value="SGD"/>
</dbReference>
<dbReference type="GO" id="GO:0005935">
    <property type="term" value="C:cellular bud neck"/>
    <property type="evidence" value="ECO:0000314"/>
    <property type="project" value="SGD"/>
</dbReference>
<dbReference type="GO" id="GO:0005934">
    <property type="term" value="C:cellular bud tip"/>
    <property type="evidence" value="ECO:0000314"/>
    <property type="project" value="SGD"/>
</dbReference>
<dbReference type="GO" id="GO:0005737">
    <property type="term" value="C:cytoplasm"/>
    <property type="evidence" value="ECO:0000314"/>
    <property type="project" value="SGD"/>
</dbReference>
<dbReference type="GO" id="GO:0010494">
    <property type="term" value="C:cytoplasmic stress granule"/>
    <property type="evidence" value="ECO:0007005"/>
    <property type="project" value="SGD"/>
</dbReference>
<dbReference type="GO" id="GO:0000131">
    <property type="term" value="C:incipient cellular bud site"/>
    <property type="evidence" value="ECO:0000314"/>
    <property type="project" value="SGD"/>
</dbReference>
<dbReference type="GO" id="GO:0043332">
    <property type="term" value="C:mating projection tip"/>
    <property type="evidence" value="ECO:0000314"/>
    <property type="project" value="SGD"/>
</dbReference>
<dbReference type="GO" id="GO:0005634">
    <property type="term" value="C:nucleus"/>
    <property type="evidence" value="ECO:0000314"/>
    <property type="project" value="ComplexPortal"/>
</dbReference>
<dbReference type="GO" id="GO:0005628">
    <property type="term" value="C:prospore membrane"/>
    <property type="evidence" value="ECO:0007005"/>
    <property type="project" value="SGD"/>
</dbReference>
<dbReference type="GO" id="GO:1902554">
    <property type="term" value="C:serine/threonine protein kinase complex"/>
    <property type="evidence" value="ECO:0000353"/>
    <property type="project" value="ComplexPortal"/>
</dbReference>
<dbReference type="GO" id="GO:0005524">
    <property type="term" value="F:ATP binding"/>
    <property type="evidence" value="ECO:0007669"/>
    <property type="project" value="UniProtKB-KW"/>
</dbReference>
<dbReference type="GO" id="GO:0042802">
    <property type="term" value="F:identical protein binding"/>
    <property type="evidence" value="ECO:0000353"/>
    <property type="project" value="IntAct"/>
</dbReference>
<dbReference type="GO" id="GO:0106310">
    <property type="term" value="F:protein serine kinase activity"/>
    <property type="evidence" value="ECO:0007669"/>
    <property type="project" value="RHEA"/>
</dbReference>
<dbReference type="GO" id="GO:0004674">
    <property type="term" value="F:protein serine/threonine kinase activity"/>
    <property type="evidence" value="ECO:0000314"/>
    <property type="project" value="SGD"/>
</dbReference>
<dbReference type="GO" id="GO:0007118">
    <property type="term" value="P:budding cell apical bud growth"/>
    <property type="evidence" value="ECO:0000315"/>
    <property type="project" value="SGD"/>
</dbReference>
<dbReference type="GO" id="GO:0030950">
    <property type="term" value="P:establishment or maintenance of actin cytoskeleton polarity"/>
    <property type="evidence" value="ECO:0000315"/>
    <property type="project" value="SGD"/>
</dbReference>
<dbReference type="GO" id="GO:0007163">
    <property type="term" value="P:establishment or maintenance of cell polarity"/>
    <property type="evidence" value="ECO:0000314"/>
    <property type="project" value="ComplexPortal"/>
</dbReference>
<dbReference type="GO" id="GO:0035556">
    <property type="term" value="P:intracellular signal transduction"/>
    <property type="evidence" value="ECO:0000318"/>
    <property type="project" value="GO_Central"/>
</dbReference>
<dbReference type="GO" id="GO:0060237">
    <property type="term" value="P:regulation of fungal-type cell wall organization"/>
    <property type="evidence" value="ECO:0000316"/>
    <property type="project" value="SGD"/>
</dbReference>
<dbReference type="GO" id="GO:0050708">
    <property type="term" value="P:regulation of protein secretion"/>
    <property type="evidence" value="ECO:0000315"/>
    <property type="project" value="SGD"/>
</dbReference>
<dbReference type="GO" id="GO:0000920">
    <property type="term" value="P:septum digestion after cytokinesis"/>
    <property type="evidence" value="ECO:0000314"/>
    <property type="project" value="ComplexPortal"/>
</dbReference>
<dbReference type="CDD" id="cd21773">
    <property type="entry name" value="MobB_CBK1"/>
    <property type="match status" value="1"/>
</dbReference>
<dbReference type="CDD" id="cd05629">
    <property type="entry name" value="STKc_NDR_like_fungal"/>
    <property type="match status" value="1"/>
</dbReference>
<dbReference type="FunFam" id="1.10.510.10:FF:000086">
    <property type="entry name" value="Non-specific serine/threonine protein kinase"/>
    <property type="match status" value="1"/>
</dbReference>
<dbReference type="FunFam" id="1.10.510.10:FF:000828">
    <property type="entry name" value="Serine/threonine-protein kinase CBK1"/>
    <property type="match status" value="1"/>
</dbReference>
<dbReference type="FunFam" id="3.30.200.20:FF:000767">
    <property type="entry name" value="Serine/threonine-protein kinase CBK1"/>
    <property type="match status" value="1"/>
</dbReference>
<dbReference type="FunFam" id="3.30.200.20:FF:000192">
    <property type="entry name" value="Serine/threonine-protein kinase cot-1"/>
    <property type="match status" value="1"/>
</dbReference>
<dbReference type="Gene3D" id="3.30.200.20">
    <property type="entry name" value="Phosphorylase Kinase, domain 1"/>
    <property type="match status" value="2"/>
</dbReference>
<dbReference type="Gene3D" id="1.10.510.10">
    <property type="entry name" value="Transferase(Phosphotransferase) domain 1"/>
    <property type="match status" value="2"/>
</dbReference>
<dbReference type="InterPro" id="IPR000961">
    <property type="entry name" value="AGC-kinase_C"/>
</dbReference>
<dbReference type="InterPro" id="IPR011009">
    <property type="entry name" value="Kinase-like_dom_sf"/>
</dbReference>
<dbReference type="InterPro" id="IPR000719">
    <property type="entry name" value="Prot_kinase_dom"/>
</dbReference>
<dbReference type="InterPro" id="IPR017441">
    <property type="entry name" value="Protein_kinase_ATP_BS"/>
</dbReference>
<dbReference type="InterPro" id="IPR050839">
    <property type="entry name" value="Rho-assoc_Ser/Thr_Kinase"/>
</dbReference>
<dbReference type="InterPro" id="IPR008271">
    <property type="entry name" value="Ser/Thr_kinase_AS"/>
</dbReference>
<dbReference type="PANTHER" id="PTHR22988:SF76">
    <property type="entry name" value="CHROMOSOME UNDETERMINED SCAFFOLD_135, WHOLE GENOME SHOTGUN SEQUENCE"/>
    <property type="match status" value="1"/>
</dbReference>
<dbReference type="PANTHER" id="PTHR22988">
    <property type="entry name" value="MYOTONIC DYSTROPHY S/T KINASE-RELATED"/>
    <property type="match status" value="1"/>
</dbReference>
<dbReference type="Pfam" id="PF00069">
    <property type="entry name" value="Pkinase"/>
    <property type="match status" value="2"/>
</dbReference>
<dbReference type="SMART" id="SM00133">
    <property type="entry name" value="S_TK_X"/>
    <property type="match status" value="1"/>
</dbReference>
<dbReference type="SMART" id="SM00220">
    <property type="entry name" value="S_TKc"/>
    <property type="match status" value="1"/>
</dbReference>
<dbReference type="SUPFAM" id="SSF56112">
    <property type="entry name" value="Protein kinase-like (PK-like)"/>
    <property type="match status" value="1"/>
</dbReference>
<dbReference type="PROSITE" id="PS51285">
    <property type="entry name" value="AGC_KINASE_CTER"/>
    <property type="match status" value="1"/>
</dbReference>
<dbReference type="PROSITE" id="PS00107">
    <property type="entry name" value="PROTEIN_KINASE_ATP"/>
    <property type="match status" value="1"/>
</dbReference>
<dbReference type="PROSITE" id="PS50011">
    <property type="entry name" value="PROTEIN_KINASE_DOM"/>
    <property type="match status" value="1"/>
</dbReference>
<dbReference type="PROSITE" id="PS00108">
    <property type="entry name" value="PROTEIN_KINASE_ST"/>
    <property type="match status" value="1"/>
</dbReference>
<comment type="function">
    <text>Protein kinase that seems to play a role in the regulation of cell morphogenesis and proliferation.</text>
</comment>
<comment type="catalytic activity">
    <reaction>
        <text>L-seryl-[protein] + ATP = O-phospho-L-seryl-[protein] + ADP + H(+)</text>
        <dbReference type="Rhea" id="RHEA:17989"/>
        <dbReference type="Rhea" id="RHEA-COMP:9863"/>
        <dbReference type="Rhea" id="RHEA-COMP:11604"/>
        <dbReference type="ChEBI" id="CHEBI:15378"/>
        <dbReference type="ChEBI" id="CHEBI:29999"/>
        <dbReference type="ChEBI" id="CHEBI:30616"/>
        <dbReference type="ChEBI" id="CHEBI:83421"/>
        <dbReference type="ChEBI" id="CHEBI:456216"/>
        <dbReference type="EC" id="2.7.11.1"/>
    </reaction>
</comment>
<comment type="catalytic activity">
    <reaction>
        <text>L-threonyl-[protein] + ATP = O-phospho-L-threonyl-[protein] + ADP + H(+)</text>
        <dbReference type="Rhea" id="RHEA:46608"/>
        <dbReference type="Rhea" id="RHEA-COMP:11060"/>
        <dbReference type="Rhea" id="RHEA-COMP:11605"/>
        <dbReference type="ChEBI" id="CHEBI:15378"/>
        <dbReference type="ChEBI" id="CHEBI:30013"/>
        <dbReference type="ChEBI" id="CHEBI:30616"/>
        <dbReference type="ChEBI" id="CHEBI:61977"/>
        <dbReference type="ChEBI" id="CHEBI:456216"/>
        <dbReference type="EC" id="2.7.11.1"/>
    </reaction>
</comment>
<comment type="subunit">
    <text evidence="5 6">Associates with PAG1/TAO3 and interacts with MOB2.</text>
</comment>
<comment type="interaction">
    <interactant intactId="EBI-4110">
        <id>P53894</id>
    </interactant>
    <interactant intactId="EBI-2073">
        <id>P21192</id>
        <label>ACE2</label>
    </interactant>
    <organismsDiffer>false</organismsDiffer>
    <experiments>3</experiments>
</comment>
<comment type="interaction">
    <interactant intactId="EBI-4110">
        <id>P53894</id>
    </interactant>
    <interactant intactId="EBI-4110">
        <id>P53894</id>
        <label>CBK1</label>
    </interactant>
    <organismsDiffer>false</organismsDiffer>
    <experiments>3</experiments>
</comment>
<comment type="interaction">
    <interactant intactId="EBI-4110">
        <id>P53894</id>
    </interactant>
    <interactant intactId="EBI-4192">
        <id>Q00684</id>
        <label>CDC14</label>
    </interactant>
    <organismsDiffer>false</organismsDiffer>
    <experiments>5</experiments>
</comment>
<comment type="interaction">
    <interactant intactId="EBI-4110">
        <id>P53894</id>
    </interactant>
    <interactant intactId="EBI-11125">
        <id>P43563</id>
        <label>MOB2</label>
    </interactant>
    <organismsDiffer>false</organismsDiffer>
    <experiments>8</experiments>
</comment>
<comment type="interaction">
    <interactant intactId="EBI-4110">
        <id>P53894</id>
    </interactant>
    <interactant intactId="EBI-18153">
        <id>P24276</id>
        <label>SSD1</label>
    </interactant>
    <organismsDiffer>false</organismsDiffer>
    <experiments>4</experiments>
</comment>
<comment type="interaction">
    <interactant intactId="EBI-4110">
        <id>P53894</id>
    </interactant>
    <interactant intactId="EBI-18961">
        <id>P40468</id>
        <label>TAO3</label>
    </interactant>
    <organismsDiffer>false</organismsDiffer>
    <experiments>9</experiments>
</comment>
<comment type="miscellaneous">
    <text evidence="7">Present with 450 molecules/cell in log phase SD medium.</text>
</comment>
<comment type="similarity">
    <text evidence="8">Belongs to the protein kinase superfamily. STE Ser/Thr protein kinase family. COT1 subfamily.</text>
</comment>
<evidence type="ECO:0000255" key="1">
    <source>
        <dbReference type="PROSITE-ProRule" id="PRU00159"/>
    </source>
</evidence>
<evidence type="ECO:0000255" key="2">
    <source>
        <dbReference type="PROSITE-ProRule" id="PRU00618"/>
    </source>
</evidence>
<evidence type="ECO:0000255" key="3">
    <source>
        <dbReference type="PROSITE-ProRule" id="PRU10027"/>
    </source>
</evidence>
<evidence type="ECO:0000256" key="4">
    <source>
        <dbReference type="SAM" id="MobiDB-lite"/>
    </source>
</evidence>
<evidence type="ECO:0000269" key="5">
    <source>
    </source>
</evidence>
<evidence type="ECO:0000269" key="6">
    <source>
    </source>
</evidence>
<evidence type="ECO:0000269" key="7">
    <source>
    </source>
</evidence>
<evidence type="ECO:0000305" key="8"/>
<evidence type="ECO:0007744" key="9">
    <source>
    </source>
</evidence>
<evidence type="ECO:0007829" key="10">
    <source>
        <dbReference type="PDB" id="4LQS"/>
    </source>
</evidence>
<evidence type="ECO:0007829" key="11">
    <source>
        <dbReference type="PDB" id="5NCL"/>
    </source>
</evidence>
<evidence type="ECO:0007829" key="12">
    <source>
        <dbReference type="PDB" id="5NCM"/>
    </source>
</evidence>
<name>CBK1_YEAST</name>
<keyword id="KW-0002">3D-structure</keyword>
<keyword id="KW-0067">ATP-binding</keyword>
<keyword id="KW-0418">Kinase</keyword>
<keyword id="KW-0547">Nucleotide-binding</keyword>
<keyword id="KW-0597">Phosphoprotein</keyword>
<keyword id="KW-1185">Reference proteome</keyword>
<keyword id="KW-0723">Serine/threonine-protein kinase</keyword>
<keyword id="KW-0808">Transferase</keyword>